<name>PSRP_BURMS</name>
<organism>
    <name type="scientific">Burkholderia mallei (strain SAVP1)</name>
    <dbReference type="NCBI Taxonomy" id="320388"/>
    <lineage>
        <taxon>Bacteria</taxon>
        <taxon>Pseudomonadati</taxon>
        <taxon>Pseudomonadota</taxon>
        <taxon>Betaproteobacteria</taxon>
        <taxon>Burkholderiales</taxon>
        <taxon>Burkholderiaceae</taxon>
        <taxon>Burkholderia</taxon>
        <taxon>pseudomallei group</taxon>
    </lineage>
</organism>
<reference key="1">
    <citation type="journal article" date="2010" name="Genome Biol. Evol.">
        <title>Continuing evolution of Burkholderia mallei through genome reduction and large-scale rearrangements.</title>
        <authorList>
            <person name="Losada L."/>
            <person name="Ronning C.M."/>
            <person name="DeShazer D."/>
            <person name="Woods D."/>
            <person name="Fedorova N."/>
            <person name="Kim H.S."/>
            <person name="Shabalina S.A."/>
            <person name="Pearson T.R."/>
            <person name="Brinkac L."/>
            <person name="Tan P."/>
            <person name="Nandi T."/>
            <person name="Crabtree J."/>
            <person name="Badger J."/>
            <person name="Beckstrom-Sternberg S."/>
            <person name="Saqib M."/>
            <person name="Schutzer S.E."/>
            <person name="Keim P."/>
            <person name="Nierman W.C."/>
        </authorList>
    </citation>
    <scope>NUCLEOTIDE SEQUENCE [LARGE SCALE GENOMIC DNA]</scope>
    <source>
        <strain>SAVP1</strain>
    </source>
</reference>
<gene>
    <name type="ordered locus">BMASAVP1_A2039</name>
</gene>
<feature type="chain" id="PRO_0000316649" description="Putative phosphoenolpyruvate synthase regulatory protein">
    <location>
        <begin position="1"/>
        <end position="271"/>
    </location>
</feature>
<feature type="binding site" evidence="1">
    <location>
        <begin position="151"/>
        <end position="158"/>
    </location>
    <ligand>
        <name>ADP</name>
        <dbReference type="ChEBI" id="CHEBI:456216"/>
    </ligand>
</feature>
<protein>
    <recommendedName>
        <fullName evidence="1">Putative phosphoenolpyruvate synthase regulatory protein</fullName>
        <shortName evidence="1">PEP synthase regulatory protein</shortName>
        <shortName evidence="1">PSRP</shortName>
        <ecNumber evidence="1">2.7.11.33</ecNumber>
        <ecNumber evidence="1">2.7.4.28</ecNumber>
    </recommendedName>
    <alternativeName>
        <fullName evidence="1">Pyruvate, water dikinase regulatory protein</fullName>
    </alternativeName>
</protein>
<keyword id="KW-0418">Kinase</keyword>
<keyword id="KW-0547">Nucleotide-binding</keyword>
<keyword id="KW-0723">Serine/threonine-protein kinase</keyword>
<keyword id="KW-0808">Transferase</keyword>
<evidence type="ECO:0000255" key="1">
    <source>
        <dbReference type="HAMAP-Rule" id="MF_01062"/>
    </source>
</evidence>
<dbReference type="EC" id="2.7.11.33" evidence="1"/>
<dbReference type="EC" id="2.7.4.28" evidence="1"/>
<dbReference type="EMBL" id="CP000526">
    <property type="protein sequence ID" value="ABM51109.1"/>
    <property type="molecule type" value="Genomic_DNA"/>
</dbReference>
<dbReference type="RefSeq" id="WP_004192738.1">
    <property type="nucleotide sequence ID" value="NC_008785.1"/>
</dbReference>
<dbReference type="SMR" id="A1V552"/>
<dbReference type="KEGG" id="bmv:BMASAVP1_A2039"/>
<dbReference type="HOGENOM" id="CLU_046206_1_0_4"/>
<dbReference type="GO" id="GO:0043531">
    <property type="term" value="F:ADP binding"/>
    <property type="evidence" value="ECO:0007669"/>
    <property type="project" value="UniProtKB-UniRule"/>
</dbReference>
<dbReference type="GO" id="GO:0005524">
    <property type="term" value="F:ATP binding"/>
    <property type="evidence" value="ECO:0007669"/>
    <property type="project" value="InterPro"/>
</dbReference>
<dbReference type="GO" id="GO:0016776">
    <property type="term" value="F:phosphotransferase activity, phosphate group as acceptor"/>
    <property type="evidence" value="ECO:0007669"/>
    <property type="project" value="UniProtKB-UniRule"/>
</dbReference>
<dbReference type="GO" id="GO:0004674">
    <property type="term" value="F:protein serine/threonine kinase activity"/>
    <property type="evidence" value="ECO:0007669"/>
    <property type="project" value="UniProtKB-UniRule"/>
</dbReference>
<dbReference type="HAMAP" id="MF_01062">
    <property type="entry name" value="PSRP"/>
    <property type="match status" value="1"/>
</dbReference>
<dbReference type="InterPro" id="IPR005177">
    <property type="entry name" value="Kinase-pyrophosphorylase"/>
</dbReference>
<dbReference type="InterPro" id="IPR026530">
    <property type="entry name" value="PSRP"/>
</dbReference>
<dbReference type="NCBIfam" id="NF003742">
    <property type="entry name" value="PRK05339.1"/>
    <property type="match status" value="1"/>
</dbReference>
<dbReference type="PANTHER" id="PTHR31756">
    <property type="entry name" value="PYRUVATE, PHOSPHATE DIKINASE REGULATORY PROTEIN 1, CHLOROPLASTIC"/>
    <property type="match status" value="1"/>
</dbReference>
<dbReference type="PANTHER" id="PTHR31756:SF3">
    <property type="entry name" value="PYRUVATE, PHOSPHATE DIKINASE REGULATORY PROTEIN 1, CHLOROPLASTIC"/>
    <property type="match status" value="1"/>
</dbReference>
<dbReference type="Pfam" id="PF03618">
    <property type="entry name" value="Kinase-PPPase"/>
    <property type="match status" value="1"/>
</dbReference>
<accession>A1V552</accession>
<sequence length="271" mass="30834">MLPTVFIVSDGTGITAETFAHSILSQFDQKFRLVRVPFIDSIEKAYDTVRKINDAAQHDGRRPIVFTTLVDGESNEIVKRSNALVLDMFQRFVEPLEQELQLKSSHAMGRVHQNADTEEYKTRIEAINFSLAHDDGQSNRNLADADVILIGVSRSGKTPTSLYLAMQYGVKAANYPLIPEDFERGKLPTPLHPHRDKLFGLSIDPMRLSEIRNERRPGSKYAAPENCRYEINEAEAMMRREGVKWLSSTHKSIEEIATTILQEIKLERQSY</sequence>
<proteinExistence type="inferred from homology"/>
<comment type="function">
    <text evidence="1">Bifunctional serine/threonine kinase and phosphorylase involved in the regulation of the phosphoenolpyruvate synthase (PEPS) by catalyzing its phosphorylation/dephosphorylation.</text>
</comment>
<comment type="catalytic activity">
    <reaction evidence="1">
        <text>[pyruvate, water dikinase] + ADP = [pyruvate, water dikinase]-phosphate + AMP + H(+)</text>
        <dbReference type="Rhea" id="RHEA:46020"/>
        <dbReference type="Rhea" id="RHEA-COMP:11425"/>
        <dbReference type="Rhea" id="RHEA-COMP:11426"/>
        <dbReference type="ChEBI" id="CHEBI:15378"/>
        <dbReference type="ChEBI" id="CHEBI:43176"/>
        <dbReference type="ChEBI" id="CHEBI:68546"/>
        <dbReference type="ChEBI" id="CHEBI:456215"/>
        <dbReference type="ChEBI" id="CHEBI:456216"/>
        <dbReference type="EC" id="2.7.11.33"/>
    </reaction>
</comment>
<comment type="catalytic activity">
    <reaction evidence="1">
        <text>[pyruvate, water dikinase]-phosphate + phosphate + H(+) = [pyruvate, water dikinase] + diphosphate</text>
        <dbReference type="Rhea" id="RHEA:48580"/>
        <dbReference type="Rhea" id="RHEA-COMP:11425"/>
        <dbReference type="Rhea" id="RHEA-COMP:11426"/>
        <dbReference type="ChEBI" id="CHEBI:15378"/>
        <dbReference type="ChEBI" id="CHEBI:33019"/>
        <dbReference type="ChEBI" id="CHEBI:43176"/>
        <dbReference type="ChEBI" id="CHEBI:43474"/>
        <dbReference type="ChEBI" id="CHEBI:68546"/>
        <dbReference type="EC" id="2.7.4.28"/>
    </reaction>
</comment>
<comment type="similarity">
    <text evidence="1">Belongs to the pyruvate, phosphate/water dikinase regulatory protein family. PSRP subfamily.</text>
</comment>